<keyword id="KW-0997">Cell inner membrane</keyword>
<keyword id="KW-1003">Cell membrane</keyword>
<keyword id="KW-0406">Ion transport</keyword>
<keyword id="KW-0408">Iron</keyword>
<keyword id="KW-0410">Iron transport</keyword>
<keyword id="KW-0472">Membrane</keyword>
<keyword id="KW-0479">Metal-binding</keyword>
<keyword id="KW-0812">Transmembrane</keyword>
<keyword id="KW-1133">Transmembrane helix</keyword>
<keyword id="KW-0813">Transport</keyword>
<keyword id="KW-0862">Zinc</keyword>
<keyword id="KW-0864">Zinc transport</keyword>
<evidence type="ECO:0000255" key="1">
    <source>
        <dbReference type="HAMAP-Rule" id="MF_01425"/>
    </source>
</evidence>
<dbReference type="EMBL" id="CP000668">
    <property type="protein sequence ID" value="ABP42170.1"/>
    <property type="molecule type" value="Genomic_DNA"/>
</dbReference>
<dbReference type="RefSeq" id="WP_002208967.1">
    <property type="nucleotide sequence ID" value="NZ_CP009715.1"/>
</dbReference>
<dbReference type="SMR" id="A4TSA8"/>
<dbReference type="GeneID" id="57974515"/>
<dbReference type="KEGG" id="ypp:YPDSF_3827"/>
<dbReference type="PATRIC" id="fig|386656.14.peg.692"/>
<dbReference type="GO" id="GO:0005886">
    <property type="term" value="C:plasma membrane"/>
    <property type="evidence" value="ECO:0007669"/>
    <property type="project" value="UniProtKB-SubCell"/>
</dbReference>
<dbReference type="GO" id="GO:0015086">
    <property type="term" value="F:cadmium ion transmembrane transporter activity"/>
    <property type="evidence" value="ECO:0007669"/>
    <property type="project" value="UniProtKB-UniRule"/>
</dbReference>
<dbReference type="GO" id="GO:0015093">
    <property type="term" value="F:ferrous iron transmembrane transporter activity"/>
    <property type="evidence" value="ECO:0007669"/>
    <property type="project" value="TreeGrafter"/>
</dbReference>
<dbReference type="GO" id="GO:0046872">
    <property type="term" value="F:metal ion binding"/>
    <property type="evidence" value="ECO:0007669"/>
    <property type="project" value="UniProtKB-KW"/>
</dbReference>
<dbReference type="GO" id="GO:0015341">
    <property type="term" value="F:zinc efflux antiporter activity"/>
    <property type="evidence" value="ECO:0007669"/>
    <property type="project" value="TreeGrafter"/>
</dbReference>
<dbReference type="GO" id="GO:0006882">
    <property type="term" value="P:intracellular zinc ion homeostasis"/>
    <property type="evidence" value="ECO:0007669"/>
    <property type="project" value="TreeGrafter"/>
</dbReference>
<dbReference type="FunFam" id="1.20.1510.10:FF:000001">
    <property type="entry name" value="Ferrous-iron efflux pump FieF"/>
    <property type="match status" value="1"/>
</dbReference>
<dbReference type="FunFam" id="3.30.70.1350:FF:000002">
    <property type="entry name" value="Ferrous-iron efflux pump FieF"/>
    <property type="match status" value="1"/>
</dbReference>
<dbReference type="Gene3D" id="1.20.1510.10">
    <property type="entry name" value="Cation efflux protein transmembrane domain"/>
    <property type="match status" value="1"/>
</dbReference>
<dbReference type="Gene3D" id="3.30.70.1350">
    <property type="entry name" value="Cation efflux protein, cytoplasmic domain"/>
    <property type="match status" value="1"/>
</dbReference>
<dbReference type="HAMAP" id="MF_01425">
    <property type="entry name" value="Cation_efflux_FieF"/>
    <property type="match status" value="1"/>
</dbReference>
<dbReference type="InterPro" id="IPR002524">
    <property type="entry name" value="Cation_efflux"/>
</dbReference>
<dbReference type="InterPro" id="IPR027470">
    <property type="entry name" value="Cation_efflux_CTD"/>
</dbReference>
<dbReference type="InterPro" id="IPR036837">
    <property type="entry name" value="Cation_efflux_CTD_sf"/>
</dbReference>
<dbReference type="InterPro" id="IPR023783">
    <property type="entry name" value="Cation_efflux_FieF"/>
</dbReference>
<dbReference type="InterPro" id="IPR027469">
    <property type="entry name" value="Cation_efflux_TMD_sf"/>
</dbReference>
<dbReference type="InterPro" id="IPR050291">
    <property type="entry name" value="CDF_Transporter"/>
</dbReference>
<dbReference type="NCBIfam" id="TIGR01297">
    <property type="entry name" value="CDF"/>
    <property type="match status" value="1"/>
</dbReference>
<dbReference type="NCBIfam" id="NF007064">
    <property type="entry name" value="PRK09509.1"/>
    <property type="match status" value="1"/>
</dbReference>
<dbReference type="PANTHER" id="PTHR43840:SF41">
    <property type="entry name" value="CATION-EFFLUX PUMP FIEF"/>
    <property type="match status" value="1"/>
</dbReference>
<dbReference type="PANTHER" id="PTHR43840">
    <property type="entry name" value="MITOCHONDRIAL METAL TRANSPORTER 1-RELATED"/>
    <property type="match status" value="1"/>
</dbReference>
<dbReference type="Pfam" id="PF01545">
    <property type="entry name" value="Cation_efflux"/>
    <property type="match status" value="1"/>
</dbReference>
<dbReference type="Pfam" id="PF16916">
    <property type="entry name" value="ZT_dimer"/>
    <property type="match status" value="1"/>
</dbReference>
<dbReference type="SUPFAM" id="SSF160240">
    <property type="entry name" value="Cation efflux protein cytoplasmic domain-like"/>
    <property type="match status" value="1"/>
</dbReference>
<dbReference type="SUPFAM" id="SSF161111">
    <property type="entry name" value="Cation efflux protein transmembrane domain-like"/>
    <property type="match status" value="1"/>
</dbReference>
<protein>
    <recommendedName>
        <fullName evidence="1">Cation-efflux pump FieF</fullName>
    </recommendedName>
</protein>
<feature type="chain" id="PRO_1000024334" description="Cation-efflux pump FieF">
    <location>
        <begin position="1"/>
        <end position="300"/>
    </location>
</feature>
<feature type="transmembrane region" description="Helical" evidence="1">
    <location>
        <begin position="12"/>
        <end position="32"/>
    </location>
</feature>
<feature type="transmembrane region" description="Helical" evidence="1">
    <location>
        <begin position="40"/>
        <end position="60"/>
    </location>
</feature>
<feature type="transmembrane region" description="Helical" evidence="1">
    <location>
        <begin position="82"/>
        <end position="102"/>
    </location>
</feature>
<feature type="transmembrane region" description="Helical" evidence="1">
    <location>
        <begin position="114"/>
        <end position="134"/>
    </location>
</feature>
<feature type="transmembrane region" description="Helical" evidence="1">
    <location>
        <begin position="155"/>
        <end position="175"/>
    </location>
</feature>
<feature type="transmembrane region" description="Helical" evidence="1">
    <location>
        <begin position="178"/>
        <end position="198"/>
    </location>
</feature>
<feature type="binding site" evidence="1">
    <location>
        <position position="45"/>
    </location>
    <ligand>
        <name>Zn(2+)</name>
        <dbReference type="ChEBI" id="CHEBI:29105"/>
    </ligand>
</feature>
<feature type="binding site" evidence="1">
    <location>
        <position position="49"/>
    </location>
    <ligand>
        <name>Zn(2+)</name>
        <dbReference type="ChEBI" id="CHEBI:29105"/>
    </ligand>
</feature>
<feature type="binding site" evidence="1">
    <location>
        <position position="153"/>
    </location>
    <ligand>
        <name>Zn(2+)</name>
        <dbReference type="ChEBI" id="CHEBI:29105"/>
    </ligand>
</feature>
<feature type="binding site" evidence="1">
    <location>
        <position position="157"/>
    </location>
    <ligand>
        <name>Zn(2+)</name>
        <dbReference type="ChEBI" id="CHEBI:29105"/>
    </ligand>
</feature>
<name>FIEF_YERPP</name>
<organism>
    <name type="scientific">Yersinia pestis (strain Pestoides F)</name>
    <dbReference type="NCBI Taxonomy" id="386656"/>
    <lineage>
        <taxon>Bacteria</taxon>
        <taxon>Pseudomonadati</taxon>
        <taxon>Pseudomonadota</taxon>
        <taxon>Gammaproteobacteria</taxon>
        <taxon>Enterobacterales</taxon>
        <taxon>Yersiniaceae</taxon>
        <taxon>Yersinia</taxon>
    </lineage>
</organism>
<sequence length="300" mass="33396">MDPQYARWVKAAALSATALASILLIIKIFAWWHTGSVSLLAALVDSLVDLAASLTNLFVVRYSLQPADEEHTFGHGKAESLAALAQSMFISGSALFLFLTGFRHLASPEPLQDPSIGIGVTLVALFSTLILVTFQRWVVRKTHSQAIRADMLHYQSDVLMNGAILIALALSWYGFRRADALFALGIGVYILYSALRMGYEAVQSLLDRALPDDERQQIIDIVTSWPGVIGAHDLRTRRSGQTRFIQLHLEMEDMMPLMEAHVLAEQVEHALLYRFPGADVLIHQDPCSVVPKERHAHWEL</sequence>
<reference key="1">
    <citation type="submission" date="2007-02" db="EMBL/GenBank/DDBJ databases">
        <title>Complete sequence of chromosome of Yersinia pestis Pestoides F.</title>
        <authorList>
            <consortium name="US DOE Joint Genome Institute"/>
            <person name="Copeland A."/>
            <person name="Lucas S."/>
            <person name="Lapidus A."/>
            <person name="Barry K."/>
            <person name="Detter J.C."/>
            <person name="Glavina del Rio T."/>
            <person name="Hammon N."/>
            <person name="Israni S."/>
            <person name="Dalin E."/>
            <person name="Tice H."/>
            <person name="Pitluck S."/>
            <person name="Di Bartolo G."/>
            <person name="Chain P."/>
            <person name="Malfatti S."/>
            <person name="Shin M."/>
            <person name="Vergez L."/>
            <person name="Schmutz J."/>
            <person name="Larimer F."/>
            <person name="Land M."/>
            <person name="Hauser L."/>
            <person name="Worsham P."/>
            <person name="Chu M."/>
            <person name="Bearden S."/>
            <person name="Garcia E."/>
            <person name="Richardson P."/>
        </authorList>
    </citation>
    <scope>NUCLEOTIDE SEQUENCE [LARGE SCALE GENOMIC DNA]</scope>
    <source>
        <strain>Pestoides F</strain>
    </source>
</reference>
<gene>
    <name evidence="1" type="primary">fieF</name>
    <name type="ordered locus">YPDSF_3827</name>
</gene>
<comment type="function">
    <text evidence="1">Divalent metal cation transporter which exports Zn(2+), Cd(2+) and possibly Fe(2+). May be involved in zinc and iron detoxification by efflux.</text>
</comment>
<comment type="catalytic activity">
    <reaction evidence="1">
        <text>Zn(2+)(in) + H(+)(out) = Zn(2+)(out) + H(+)(in)</text>
        <dbReference type="Rhea" id="RHEA:28839"/>
        <dbReference type="ChEBI" id="CHEBI:15378"/>
        <dbReference type="ChEBI" id="CHEBI:29105"/>
    </reaction>
</comment>
<comment type="catalytic activity">
    <reaction evidence="1">
        <text>Cd(2+)(in) + H(+)(out) = Cd(2+)(out) + H(+)(in)</text>
        <dbReference type="Rhea" id="RHEA:28739"/>
        <dbReference type="ChEBI" id="CHEBI:15378"/>
        <dbReference type="ChEBI" id="CHEBI:48775"/>
    </reaction>
</comment>
<comment type="catalytic activity">
    <reaction evidence="1">
        <text>Fe(2+)(in) + H(+)(out) = Fe(2+)(out) + H(+)(in)</text>
        <dbReference type="Rhea" id="RHEA:29439"/>
        <dbReference type="ChEBI" id="CHEBI:15378"/>
        <dbReference type="ChEBI" id="CHEBI:29033"/>
    </reaction>
</comment>
<comment type="subunit">
    <text evidence="1">Homodimer.</text>
</comment>
<comment type="subcellular location">
    <subcellularLocation>
        <location evidence="1">Cell inner membrane</location>
        <topology evidence="1">Multi-pass membrane protein</topology>
    </subcellularLocation>
</comment>
<comment type="similarity">
    <text evidence="1">Belongs to the cation diffusion facilitator (CDF) transporter (TC 2.A.4) family. FieF subfamily.</text>
</comment>
<proteinExistence type="inferred from homology"/>
<accession>A4TSA8</accession>